<feature type="chain" id="PRO_0000212476" description="Ubiquitin-like protein ATG12">
    <location>
        <begin position="1"/>
        <end position="181"/>
    </location>
</feature>
<feature type="region of interest" description="Disordered" evidence="2">
    <location>
        <begin position="1"/>
        <end position="40"/>
    </location>
</feature>
<feature type="compositionally biased region" description="Basic and acidic residues" evidence="2">
    <location>
        <begin position="27"/>
        <end position="40"/>
    </location>
</feature>
<feature type="cross-link" description="Glycyl lysine isopeptide (Gly-Lys) (interchain with K-144 in ATG5)" evidence="1">
    <location>
        <position position="181"/>
    </location>
</feature>
<reference key="1">
    <citation type="journal article" date="2004" name="Nature">
        <title>Genome evolution in yeasts.</title>
        <authorList>
            <person name="Dujon B."/>
            <person name="Sherman D."/>
            <person name="Fischer G."/>
            <person name="Durrens P."/>
            <person name="Casaregola S."/>
            <person name="Lafontaine I."/>
            <person name="de Montigny J."/>
            <person name="Marck C."/>
            <person name="Neuveglise C."/>
            <person name="Talla E."/>
            <person name="Goffard N."/>
            <person name="Frangeul L."/>
            <person name="Aigle M."/>
            <person name="Anthouard V."/>
            <person name="Babour A."/>
            <person name="Barbe V."/>
            <person name="Barnay S."/>
            <person name="Blanchin S."/>
            <person name="Beckerich J.-M."/>
            <person name="Beyne E."/>
            <person name="Bleykasten C."/>
            <person name="Boisrame A."/>
            <person name="Boyer J."/>
            <person name="Cattolico L."/>
            <person name="Confanioleri F."/>
            <person name="de Daruvar A."/>
            <person name="Despons L."/>
            <person name="Fabre E."/>
            <person name="Fairhead C."/>
            <person name="Ferry-Dumazet H."/>
            <person name="Groppi A."/>
            <person name="Hantraye F."/>
            <person name="Hennequin C."/>
            <person name="Jauniaux N."/>
            <person name="Joyet P."/>
            <person name="Kachouri R."/>
            <person name="Kerrest A."/>
            <person name="Koszul R."/>
            <person name="Lemaire M."/>
            <person name="Lesur I."/>
            <person name="Ma L."/>
            <person name="Muller H."/>
            <person name="Nicaud J.-M."/>
            <person name="Nikolski M."/>
            <person name="Oztas S."/>
            <person name="Ozier-Kalogeropoulos O."/>
            <person name="Pellenz S."/>
            <person name="Potier S."/>
            <person name="Richard G.-F."/>
            <person name="Straub M.-L."/>
            <person name="Suleau A."/>
            <person name="Swennen D."/>
            <person name="Tekaia F."/>
            <person name="Wesolowski-Louvel M."/>
            <person name="Westhof E."/>
            <person name="Wirth B."/>
            <person name="Zeniou-Meyer M."/>
            <person name="Zivanovic Y."/>
            <person name="Bolotin-Fukuhara M."/>
            <person name="Thierry A."/>
            <person name="Bouchier C."/>
            <person name="Caudron B."/>
            <person name="Scarpelli C."/>
            <person name="Gaillardin C."/>
            <person name="Weissenbach J."/>
            <person name="Wincker P."/>
            <person name="Souciet J.-L."/>
        </authorList>
    </citation>
    <scope>NUCLEOTIDE SEQUENCE [LARGE SCALE GENOMIC DNA]</scope>
    <source>
        <strain>ATCC 2001 / BCRC 20586 / JCM 3761 / NBRC 0622 / NRRL Y-65 / CBS 138</strain>
    </source>
</reference>
<comment type="function">
    <text evidence="1">Ubiquitin-like protein involved in cytoplasm to vacuole transport (Cvt), autophagy vesicles formation, mitophagy, and nucleophagy. Conjugation with ATG5 through a ubiquitin-like conjugating system involving also ATG7 as an E1-like activating enzyme and ATG10 as an E2-like conjugating enzyme, is essential for its function. The ATG12-ATG5 conjugate functions as an E3-like enzyme which is required for lipidation of ATG8 and ATG8 association to the vesicle membranes (By similarity).</text>
</comment>
<comment type="subunit">
    <text evidence="1">Forms a conjugate with ATG5.</text>
</comment>
<comment type="subcellular location">
    <subcellularLocation>
        <location evidence="1">Preautophagosomal structure membrane</location>
        <topology evidence="1">Peripheral membrane protein</topology>
    </subcellularLocation>
</comment>
<comment type="similarity">
    <text evidence="3">Belongs to the ATG12 family.</text>
</comment>
<keyword id="KW-0072">Autophagy</keyword>
<keyword id="KW-1017">Isopeptide bond</keyword>
<keyword id="KW-0472">Membrane</keyword>
<keyword id="KW-0653">Protein transport</keyword>
<keyword id="KW-1185">Reference proteome</keyword>
<keyword id="KW-0813">Transport</keyword>
<keyword id="KW-0833">Ubl conjugation pathway</keyword>
<name>ATG12_CANGA</name>
<sequence>MSRLLESEQESESGSENLVSSGSIALSKHEEQKRELGVENRLEQYSRRLSQLALVDTNESSDSSEKEEVFVQGSLRSQQSLKASIQSSSHGHTGAPQKVMIKFQSIGSITSITPSVCQISTNKPFSVIISFLQRKLKMENIHCYINNSFAPVPSQNVGDLWNQFKVNDELIVSYCGSVAFG</sequence>
<dbReference type="EMBL" id="CR380957">
    <property type="protein sequence ID" value="CAG61478.1"/>
    <property type="molecule type" value="Genomic_DNA"/>
</dbReference>
<dbReference type="RefSeq" id="XP_448517.1">
    <property type="nucleotide sequence ID" value="XM_448517.1"/>
</dbReference>
<dbReference type="SMR" id="Q6FMM7"/>
<dbReference type="FunCoup" id="Q6FMM7">
    <property type="interactions" value="184"/>
</dbReference>
<dbReference type="STRING" id="284593.Q6FMM7"/>
<dbReference type="EnsemblFungi" id="CAGL0K06765g-T">
    <property type="protein sequence ID" value="CAGL0K06765g-T-p1"/>
    <property type="gene ID" value="CAGL0K06765g"/>
</dbReference>
<dbReference type="KEGG" id="cgr:2890405"/>
<dbReference type="CGD" id="CAL0134023">
    <property type="gene designation" value="CAGL0K06765g"/>
</dbReference>
<dbReference type="VEuPathDB" id="FungiDB:CAGL0K06765g"/>
<dbReference type="eggNOG" id="KOG3439">
    <property type="taxonomic scope" value="Eukaryota"/>
</dbReference>
<dbReference type="HOGENOM" id="CLU_106795_0_0_1"/>
<dbReference type="InParanoid" id="Q6FMM7"/>
<dbReference type="OMA" id="NIGELWM"/>
<dbReference type="Proteomes" id="UP000002428">
    <property type="component" value="Chromosome K"/>
</dbReference>
<dbReference type="GO" id="GO:0034274">
    <property type="term" value="C:Atg12-Atg5-Atg16 complex"/>
    <property type="evidence" value="ECO:0007669"/>
    <property type="project" value="EnsemblFungi"/>
</dbReference>
<dbReference type="GO" id="GO:0000421">
    <property type="term" value="C:autophagosome membrane"/>
    <property type="evidence" value="ECO:0007669"/>
    <property type="project" value="TreeGrafter"/>
</dbReference>
<dbReference type="GO" id="GO:0005829">
    <property type="term" value="C:cytosol"/>
    <property type="evidence" value="ECO:0007669"/>
    <property type="project" value="EnsemblFungi"/>
</dbReference>
<dbReference type="GO" id="GO:0034045">
    <property type="term" value="C:phagophore assembly site membrane"/>
    <property type="evidence" value="ECO:0007669"/>
    <property type="project" value="UniProtKB-SubCell"/>
</dbReference>
<dbReference type="GO" id="GO:0019776">
    <property type="term" value="F:Atg8-family ligase activity"/>
    <property type="evidence" value="ECO:0007669"/>
    <property type="project" value="EnsemblFungi"/>
</dbReference>
<dbReference type="GO" id="GO:0008047">
    <property type="term" value="F:enzyme activator activity"/>
    <property type="evidence" value="ECO:0007669"/>
    <property type="project" value="EnsemblFungi"/>
</dbReference>
<dbReference type="GO" id="GO:0031386">
    <property type="term" value="F:protein tag activity"/>
    <property type="evidence" value="ECO:0007669"/>
    <property type="project" value="EnsemblFungi"/>
</dbReference>
<dbReference type="GO" id="GO:0000045">
    <property type="term" value="P:autophagosome assembly"/>
    <property type="evidence" value="ECO:0007669"/>
    <property type="project" value="EnsemblFungi"/>
</dbReference>
<dbReference type="GO" id="GO:0097352">
    <property type="term" value="P:autophagosome maturation"/>
    <property type="evidence" value="ECO:0007669"/>
    <property type="project" value="TreeGrafter"/>
</dbReference>
<dbReference type="GO" id="GO:0000422">
    <property type="term" value="P:autophagy of mitochondrion"/>
    <property type="evidence" value="ECO:0007669"/>
    <property type="project" value="EnsemblFungi"/>
</dbReference>
<dbReference type="GO" id="GO:0032258">
    <property type="term" value="P:cytoplasm to vacuole targeting by the Cvt pathway"/>
    <property type="evidence" value="ECO:0007669"/>
    <property type="project" value="EnsemblFungi"/>
</dbReference>
<dbReference type="GO" id="GO:0061723">
    <property type="term" value="P:glycophagy"/>
    <property type="evidence" value="ECO:0007669"/>
    <property type="project" value="TreeGrafter"/>
</dbReference>
<dbReference type="GO" id="GO:0034727">
    <property type="term" value="P:piecemeal microautophagy of the nucleus"/>
    <property type="evidence" value="ECO:0007669"/>
    <property type="project" value="EnsemblFungi"/>
</dbReference>
<dbReference type="CDD" id="cd01612">
    <property type="entry name" value="Ubl_ATG12"/>
    <property type="match status" value="1"/>
</dbReference>
<dbReference type="Gene3D" id="3.10.20.90">
    <property type="entry name" value="Phosphatidylinositol 3-kinase Catalytic Subunit, Chain A, domain 1"/>
    <property type="match status" value="1"/>
</dbReference>
<dbReference type="InterPro" id="IPR007242">
    <property type="entry name" value="Atg12"/>
</dbReference>
<dbReference type="InterPro" id="IPR029071">
    <property type="entry name" value="Ubiquitin-like_domsf"/>
</dbReference>
<dbReference type="PANTHER" id="PTHR13385">
    <property type="entry name" value="AUTOPHAGY PROTEIN 12"/>
    <property type="match status" value="1"/>
</dbReference>
<dbReference type="PANTHER" id="PTHR13385:SF0">
    <property type="entry name" value="UBIQUITIN-LIKE PROTEIN ATG12"/>
    <property type="match status" value="1"/>
</dbReference>
<dbReference type="Pfam" id="PF04110">
    <property type="entry name" value="APG12"/>
    <property type="match status" value="1"/>
</dbReference>
<dbReference type="SUPFAM" id="SSF54236">
    <property type="entry name" value="Ubiquitin-like"/>
    <property type="match status" value="1"/>
</dbReference>
<evidence type="ECO:0000250" key="1"/>
<evidence type="ECO:0000256" key="2">
    <source>
        <dbReference type="SAM" id="MobiDB-lite"/>
    </source>
</evidence>
<evidence type="ECO:0000305" key="3"/>
<organism>
    <name type="scientific">Candida glabrata (strain ATCC 2001 / BCRC 20586 / JCM 3761 / NBRC 0622 / NRRL Y-65 / CBS 138)</name>
    <name type="common">Yeast</name>
    <name type="synonym">Nakaseomyces glabratus</name>
    <dbReference type="NCBI Taxonomy" id="284593"/>
    <lineage>
        <taxon>Eukaryota</taxon>
        <taxon>Fungi</taxon>
        <taxon>Dikarya</taxon>
        <taxon>Ascomycota</taxon>
        <taxon>Saccharomycotina</taxon>
        <taxon>Saccharomycetes</taxon>
        <taxon>Saccharomycetales</taxon>
        <taxon>Saccharomycetaceae</taxon>
        <taxon>Nakaseomyces</taxon>
    </lineage>
</organism>
<proteinExistence type="inferred from homology"/>
<accession>Q6FMM7</accession>
<gene>
    <name type="primary">ATG12</name>
    <name type="ordered locus">CAGL0K06765g</name>
</gene>
<protein>
    <recommendedName>
        <fullName>Ubiquitin-like protein ATG12</fullName>
    </recommendedName>
    <alternativeName>
        <fullName>Autophagy-related protein 12</fullName>
    </alternativeName>
</protein>